<geneLocation type="chloroplast"/>
<accession>O78405</accession>
<evidence type="ECO:0000255" key="1">
    <source>
        <dbReference type="HAMAP-Rule" id="MF_01390"/>
    </source>
</evidence>
<sequence>MEEFKRYFELDRSQQHDFIYPLIFQEYIYALAHDRDLNRSIFFESAGYDKKYSFLIVKRLITHLITQMYQQNHFYTNDSNQNKFLGYNTNLYSQMIFEGFAVVVEIPFYLRFRSFLEGKERVKSHNLRSLHSIFPFLEDKFSHLNYVLDILIPHSIHLEILVQTLRYWVKXPSSLHLLRFFLHEYPNRNSLITPKKSSFSFSKRNQRFFLLLYNFHVCEYESIFVFLRNQSSHLCSISSETFIERISFYKKIKLEVFTKDFKAILWVFKDPFLHYVRYRGKSILXSKGSSLLMNKWKYYLVNFWECYFYMWSQSRRIHIXQLSKNSLDFLGYLSSVRLKPSMVRSQMIENSFLIENASKKFDSLVXITPMIASLSKAXFXNVLGHPMSKPVWADLSDSDIIDRFGRIYRNLSHYHSGSLQKMSLYRIKYILRLSCARTLARKHKSTVRAFLKRLGVGLLEEFFTEEEQVFYLTFPKASXTIGKLYRRRIGYEDIFXXXDPXNHE</sequence>
<protein>
    <recommendedName>
        <fullName evidence="1">Maturase K</fullName>
    </recommendedName>
    <alternativeName>
        <fullName evidence="1">Intron maturase</fullName>
    </alternativeName>
</protein>
<name>MATK_PRICE</name>
<feature type="chain" id="PRO_0000143649" description="Maturase K">
    <location>
        <begin position="1"/>
        <end position="504"/>
    </location>
</feature>
<proteinExistence type="inferred from homology"/>
<comment type="function">
    <text evidence="1">Usually encoded in the trnK tRNA gene intron. Probably assists in splicing its own and other chloroplast group II introns.</text>
</comment>
<comment type="subcellular location">
    <subcellularLocation>
        <location>Plastid</location>
        <location>Chloroplast</location>
    </subcellularLocation>
</comment>
<comment type="similarity">
    <text evidence="1">Belongs to the intron maturase 2 family. MatK subfamily.</text>
</comment>
<gene>
    <name evidence="1" type="primary">matK</name>
</gene>
<organism>
    <name type="scientific">Prionotes cerinthoides</name>
    <name type="common">Climbing heath</name>
    <dbReference type="NCBI Taxonomy" id="55259"/>
    <lineage>
        <taxon>Eukaryota</taxon>
        <taxon>Viridiplantae</taxon>
        <taxon>Streptophyta</taxon>
        <taxon>Embryophyta</taxon>
        <taxon>Tracheophyta</taxon>
        <taxon>Spermatophyta</taxon>
        <taxon>Magnoliopsida</taxon>
        <taxon>eudicotyledons</taxon>
        <taxon>Gunneridae</taxon>
        <taxon>Pentapetalae</taxon>
        <taxon>asterids</taxon>
        <taxon>Ericales</taxon>
        <taxon>Ericaceae</taxon>
        <taxon>Epacridoideae</taxon>
        <taxon>Prionoteae</taxon>
        <taxon>Prionotes</taxon>
    </lineage>
</organism>
<reference key="1">
    <citation type="journal article" date="1999" name="Plant Syst. Evol.">
        <title>Phylogenetic relationships of epacrids and vaccinioids (Ericaceae s.l.) based on matK sequence data.</title>
        <authorList>
            <person name="Kron K.A."/>
            <person name="Fuller R."/>
            <person name="Crayn D.M."/>
            <person name="Gadek P.A."/>
            <person name="Quinn C.J."/>
        </authorList>
    </citation>
    <scope>NUCLEOTIDE SEQUENCE [GENOMIC DNA]</scope>
</reference>
<dbReference type="EMBL" id="AF015642">
    <property type="protein sequence ID" value="AAC62174.1"/>
    <property type="molecule type" value="Genomic_DNA"/>
</dbReference>
<dbReference type="GO" id="GO:0009507">
    <property type="term" value="C:chloroplast"/>
    <property type="evidence" value="ECO:0007669"/>
    <property type="project" value="UniProtKB-SubCell"/>
</dbReference>
<dbReference type="GO" id="GO:0003723">
    <property type="term" value="F:RNA binding"/>
    <property type="evidence" value="ECO:0007669"/>
    <property type="project" value="UniProtKB-KW"/>
</dbReference>
<dbReference type="GO" id="GO:0006397">
    <property type="term" value="P:mRNA processing"/>
    <property type="evidence" value="ECO:0007669"/>
    <property type="project" value="UniProtKB-KW"/>
</dbReference>
<dbReference type="GO" id="GO:0008380">
    <property type="term" value="P:RNA splicing"/>
    <property type="evidence" value="ECO:0007669"/>
    <property type="project" value="UniProtKB-UniRule"/>
</dbReference>
<dbReference type="GO" id="GO:0008033">
    <property type="term" value="P:tRNA processing"/>
    <property type="evidence" value="ECO:0007669"/>
    <property type="project" value="UniProtKB-KW"/>
</dbReference>
<dbReference type="HAMAP" id="MF_01390">
    <property type="entry name" value="MatK"/>
    <property type="match status" value="1"/>
</dbReference>
<dbReference type="InterPro" id="IPR024937">
    <property type="entry name" value="Domain_X"/>
</dbReference>
<dbReference type="InterPro" id="IPR002866">
    <property type="entry name" value="Maturase_MatK"/>
</dbReference>
<dbReference type="InterPro" id="IPR024942">
    <property type="entry name" value="Maturase_MatK_N"/>
</dbReference>
<dbReference type="PANTHER" id="PTHR34811">
    <property type="entry name" value="MATURASE K"/>
    <property type="match status" value="1"/>
</dbReference>
<dbReference type="PANTHER" id="PTHR34811:SF1">
    <property type="entry name" value="MATURASE K"/>
    <property type="match status" value="1"/>
</dbReference>
<dbReference type="Pfam" id="PF01348">
    <property type="entry name" value="Intron_maturas2"/>
    <property type="match status" value="1"/>
</dbReference>
<dbReference type="Pfam" id="PF01824">
    <property type="entry name" value="MatK_N"/>
    <property type="match status" value="1"/>
</dbReference>
<keyword id="KW-0150">Chloroplast</keyword>
<keyword id="KW-0507">mRNA processing</keyword>
<keyword id="KW-0934">Plastid</keyword>
<keyword id="KW-0694">RNA-binding</keyword>
<keyword id="KW-0819">tRNA processing</keyword>